<reference key="1">
    <citation type="journal article" date="2005" name="Proc. Natl. Acad. Sci. U.S.A.">
        <title>Complete genome sequence of Vibrio fischeri: a symbiotic bacterium with pathogenic congeners.</title>
        <authorList>
            <person name="Ruby E.G."/>
            <person name="Urbanowski M."/>
            <person name="Campbell J."/>
            <person name="Dunn A."/>
            <person name="Faini M."/>
            <person name="Gunsalus R."/>
            <person name="Lostroh P."/>
            <person name="Lupp C."/>
            <person name="McCann J."/>
            <person name="Millikan D."/>
            <person name="Schaefer A."/>
            <person name="Stabb E."/>
            <person name="Stevens A."/>
            <person name="Visick K."/>
            <person name="Whistler C."/>
            <person name="Greenberg E.P."/>
        </authorList>
    </citation>
    <scope>NUCLEOTIDE SEQUENCE [LARGE SCALE GENOMIC DNA]</scope>
    <source>
        <strain>ATCC 700601 / ES114</strain>
    </source>
</reference>
<comment type="function">
    <text evidence="1">Facilitates the functional incorporation of the urease nickel metallocenter. This process requires GTP hydrolysis, probably effectuated by UreG.</text>
</comment>
<comment type="subunit">
    <text evidence="1">Homodimer. UreD, UreF and UreG form a complex that acts as a GTP-hydrolysis-dependent molecular chaperone, activating the urease apoprotein by helping to assemble the nickel containing metallocenter of UreC. The UreE protein probably delivers the nickel.</text>
</comment>
<comment type="subcellular location">
    <subcellularLocation>
        <location evidence="1">Cytoplasm</location>
    </subcellularLocation>
</comment>
<comment type="similarity">
    <text evidence="1">Belongs to the SIMIBI class G3E GTPase family. UreG subfamily.</text>
</comment>
<keyword id="KW-0143">Chaperone</keyword>
<keyword id="KW-0963">Cytoplasm</keyword>
<keyword id="KW-0342">GTP-binding</keyword>
<keyword id="KW-0996">Nickel insertion</keyword>
<keyword id="KW-0547">Nucleotide-binding</keyword>
<keyword id="KW-1185">Reference proteome</keyword>
<protein>
    <recommendedName>
        <fullName evidence="1">Urease accessory protein UreG</fullName>
    </recommendedName>
</protein>
<evidence type="ECO:0000255" key="1">
    <source>
        <dbReference type="HAMAP-Rule" id="MF_01389"/>
    </source>
</evidence>
<proteinExistence type="inferred from homology"/>
<name>UREG_ALIF1</name>
<organism>
    <name type="scientific">Aliivibrio fischeri (strain ATCC 700601 / ES114)</name>
    <name type="common">Vibrio fischeri</name>
    <dbReference type="NCBI Taxonomy" id="312309"/>
    <lineage>
        <taxon>Bacteria</taxon>
        <taxon>Pseudomonadati</taxon>
        <taxon>Pseudomonadota</taxon>
        <taxon>Gammaproteobacteria</taxon>
        <taxon>Vibrionales</taxon>
        <taxon>Vibrionaceae</taxon>
        <taxon>Aliivibrio</taxon>
    </lineage>
</organism>
<dbReference type="EMBL" id="CP000020">
    <property type="protein sequence ID" value="AAW85165.1"/>
    <property type="molecule type" value="Genomic_DNA"/>
</dbReference>
<dbReference type="RefSeq" id="WP_011261400.1">
    <property type="nucleotide sequence ID" value="NC_006840.2"/>
</dbReference>
<dbReference type="RefSeq" id="YP_204053.1">
    <property type="nucleotide sequence ID" value="NC_006840.2"/>
</dbReference>
<dbReference type="SMR" id="Q5E731"/>
<dbReference type="STRING" id="312309.VF_0670"/>
<dbReference type="EnsemblBacteria" id="AAW85165">
    <property type="protein sequence ID" value="AAW85165"/>
    <property type="gene ID" value="VF_0670"/>
</dbReference>
<dbReference type="GeneID" id="54163325"/>
<dbReference type="KEGG" id="vfi:VF_0670"/>
<dbReference type="PATRIC" id="fig|312309.11.peg.663"/>
<dbReference type="eggNOG" id="COG0378">
    <property type="taxonomic scope" value="Bacteria"/>
</dbReference>
<dbReference type="HOGENOM" id="CLU_072144_1_0_6"/>
<dbReference type="OrthoDB" id="9802035at2"/>
<dbReference type="Proteomes" id="UP000000537">
    <property type="component" value="Chromosome I"/>
</dbReference>
<dbReference type="GO" id="GO:0005737">
    <property type="term" value="C:cytoplasm"/>
    <property type="evidence" value="ECO:0007669"/>
    <property type="project" value="UniProtKB-SubCell"/>
</dbReference>
<dbReference type="GO" id="GO:0005525">
    <property type="term" value="F:GTP binding"/>
    <property type="evidence" value="ECO:0007669"/>
    <property type="project" value="UniProtKB-KW"/>
</dbReference>
<dbReference type="GO" id="GO:0003924">
    <property type="term" value="F:GTPase activity"/>
    <property type="evidence" value="ECO:0007669"/>
    <property type="project" value="InterPro"/>
</dbReference>
<dbReference type="GO" id="GO:0016151">
    <property type="term" value="F:nickel cation binding"/>
    <property type="evidence" value="ECO:0007669"/>
    <property type="project" value="UniProtKB-UniRule"/>
</dbReference>
<dbReference type="GO" id="GO:0043419">
    <property type="term" value="P:urea catabolic process"/>
    <property type="evidence" value="ECO:0007669"/>
    <property type="project" value="InterPro"/>
</dbReference>
<dbReference type="CDD" id="cd05540">
    <property type="entry name" value="UreG"/>
    <property type="match status" value="1"/>
</dbReference>
<dbReference type="FunFam" id="3.40.50.300:FF:000208">
    <property type="entry name" value="Urease accessory protein UreG"/>
    <property type="match status" value="1"/>
</dbReference>
<dbReference type="Gene3D" id="3.40.50.300">
    <property type="entry name" value="P-loop containing nucleotide triphosphate hydrolases"/>
    <property type="match status" value="1"/>
</dbReference>
<dbReference type="HAMAP" id="MF_01389">
    <property type="entry name" value="UreG"/>
    <property type="match status" value="1"/>
</dbReference>
<dbReference type="InterPro" id="IPR003495">
    <property type="entry name" value="CobW/HypB/UreG_nucleotide-bd"/>
</dbReference>
<dbReference type="InterPro" id="IPR027417">
    <property type="entry name" value="P-loop_NTPase"/>
</dbReference>
<dbReference type="InterPro" id="IPR004400">
    <property type="entry name" value="UreG"/>
</dbReference>
<dbReference type="NCBIfam" id="TIGR00101">
    <property type="entry name" value="ureG"/>
    <property type="match status" value="1"/>
</dbReference>
<dbReference type="PANTHER" id="PTHR31715">
    <property type="entry name" value="UREASE ACCESSORY PROTEIN G"/>
    <property type="match status" value="1"/>
</dbReference>
<dbReference type="PANTHER" id="PTHR31715:SF0">
    <property type="entry name" value="UREASE ACCESSORY PROTEIN G"/>
    <property type="match status" value="1"/>
</dbReference>
<dbReference type="Pfam" id="PF02492">
    <property type="entry name" value="cobW"/>
    <property type="match status" value="1"/>
</dbReference>
<dbReference type="PIRSF" id="PIRSF005624">
    <property type="entry name" value="Ni-bind_GTPase"/>
    <property type="match status" value="1"/>
</dbReference>
<dbReference type="SUPFAM" id="SSF52540">
    <property type="entry name" value="P-loop containing nucleoside triphosphate hydrolases"/>
    <property type="match status" value="1"/>
</dbReference>
<sequence length="206" mass="22290">MQDYKQPLRIGVGGPVGSGKTALLEVLCKTLRDTYQIAVVTNDIYTQEDAKILTQAEALAADRIIGVETGGCPHTAIREDASMNLAAVEELAQRHKNLDVVFVESGGDNLSATFSPELADLTIYVIDVAEGEKIPRKGGPGITKSDLLIINKIDLAPYVGASLEVMESDTARMRPTRPYVFTNLKEGVGLDKIIEFIVDRGMLDAK</sequence>
<gene>
    <name evidence="1" type="primary">ureG</name>
    <name type="ordered locus">VF_0670</name>
</gene>
<feature type="chain" id="PRO_0000347455" description="Urease accessory protein UreG">
    <location>
        <begin position="1"/>
        <end position="206"/>
    </location>
</feature>
<feature type="binding site" evidence="1">
    <location>
        <begin position="14"/>
        <end position="21"/>
    </location>
    <ligand>
        <name>GTP</name>
        <dbReference type="ChEBI" id="CHEBI:37565"/>
    </ligand>
</feature>
<accession>Q5E731</accession>